<feature type="chain" id="PRO_0000212511" description="SWR1-complex protein 5">
    <location>
        <begin position="1"/>
        <end position="354"/>
    </location>
</feature>
<feature type="domain" description="BCNT-C" evidence="2">
    <location>
        <begin position="272"/>
        <end position="354"/>
    </location>
</feature>
<feature type="region of interest" description="Disordered" evidence="3">
    <location>
        <begin position="1"/>
        <end position="93"/>
    </location>
</feature>
<feature type="region of interest" description="Disordered" evidence="3">
    <location>
        <begin position="109"/>
        <end position="134"/>
    </location>
</feature>
<feature type="region of interest" description="Disordered" evidence="3">
    <location>
        <begin position="222"/>
        <end position="292"/>
    </location>
</feature>
<feature type="compositionally biased region" description="Polar residues" evidence="3">
    <location>
        <begin position="1"/>
        <end position="11"/>
    </location>
</feature>
<feature type="compositionally biased region" description="Acidic residues" evidence="3">
    <location>
        <begin position="24"/>
        <end position="33"/>
    </location>
</feature>
<feature type="compositionally biased region" description="Acidic residues" evidence="3">
    <location>
        <begin position="60"/>
        <end position="70"/>
    </location>
</feature>
<feature type="compositionally biased region" description="Low complexity" evidence="3">
    <location>
        <begin position="223"/>
        <end position="261"/>
    </location>
</feature>
<feature type="compositionally biased region" description="Low complexity" evidence="3">
    <location>
        <begin position="276"/>
        <end position="292"/>
    </location>
</feature>
<keyword id="KW-0010">Activator</keyword>
<keyword id="KW-0156">Chromatin regulator</keyword>
<keyword id="KW-0539">Nucleus</keyword>
<keyword id="KW-1185">Reference proteome</keyword>
<keyword id="KW-0804">Transcription</keyword>
<keyword id="KW-0805">Transcription regulation</keyword>
<reference key="1">
    <citation type="journal article" date="2006" name="Nature">
        <title>Insights from the genome of the biotrophic fungal plant pathogen Ustilago maydis.</title>
        <authorList>
            <person name="Kaemper J."/>
            <person name="Kahmann R."/>
            <person name="Boelker M."/>
            <person name="Ma L.-J."/>
            <person name="Brefort T."/>
            <person name="Saville B.J."/>
            <person name="Banuett F."/>
            <person name="Kronstad J.W."/>
            <person name="Gold S.E."/>
            <person name="Mueller O."/>
            <person name="Perlin M.H."/>
            <person name="Woesten H.A.B."/>
            <person name="de Vries R."/>
            <person name="Ruiz-Herrera J."/>
            <person name="Reynaga-Pena C.G."/>
            <person name="Snetselaar K."/>
            <person name="McCann M."/>
            <person name="Perez-Martin J."/>
            <person name="Feldbruegge M."/>
            <person name="Basse C.W."/>
            <person name="Steinberg G."/>
            <person name="Ibeas J.I."/>
            <person name="Holloman W."/>
            <person name="Guzman P."/>
            <person name="Farman M.L."/>
            <person name="Stajich J.E."/>
            <person name="Sentandreu R."/>
            <person name="Gonzalez-Prieto J.M."/>
            <person name="Kennell J.C."/>
            <person name="Molina L."/>
            <person name="Schirawski J."/>
            <person name="Mendoza-Mendoza A."/>
            <person name="Greilinger D."/>
            <person name="Muench K."/>
            <person name="Roessel N."/>
            <person name="Scherer M."/>
            <person name="Vranes M."/>
            <person name="Ladendorf O."/>
            <person name="Vincon V."/>
            <person name="Fuchs U."/>
            <person name="Sandrock B."/>
            <person name="Meng S."/>
            <person name="Ho E.C.H."/>
            <person name="Cahill M.J."/>
            <person name="Boyce K.J."/>
            <person name="Klose J."/>
            <person name="Klosterman S.J."/>
            <person name="Deelstra H.J."/>
            <person name="Ortiz-Castellanos L."/>
            <person name="Li W."/>
            <person name="Sanchez-Alonso P."/>
            <person name="Schreier P.H."/>
            <person name="Haeuser-Hahn I."/>
            <person name="Vaupel M."/>
            <person name="Koopmann E."/>
            <person name="Friedrich G."/>
            <person name="Voss H."/>
            <person name="Schlueter T."/>
            <person name="Margolis J."/>
            <person name="Platt D."/>
            <person name="Swimmer C."/>
            <person name="Gnirke A."/>
            <person name="Chen F."/>
            <person name="Vysotskaia V."/>
            <person name="Mannhaupt G."/>
            <person name="Gueldener U."/>
            <person name="Muensterkoetter M."/>
            <person name="Haase D."/>
            <person name="Oesterheld M."/>
            <person name="Mewes H.-W."/>
            <person name="Mauceli E.W."/>
            <person name="DeCaprio D."/>
            <person name="Wade C.M."/>
            <person name="Butler J."/>
            <person name="Young S.K."/>
            <person name="Jaffe D.B."/>
            <person name="Calvo S.E."/>
            <person name="Nusbaum C."/>
            <person name="Galagan J.E."/>
            <person name="Birren B.W."/>
        </authorList>
    </citation>
    <scope>NUCLEOTIDE SEQUENCE [LARGE SCALE GENOMIC DNA]</scope>
    <source>
        <strain>DSM 14603 / FGSC 9021 / UM521</strain>
    </source>
</reference>
<reference key="2">
    <citation type="submission" date="2014-09" db="EMBL/GenBank/DDBJ databases">
        <authorList>
            <person name="Gueldener U."/>
            <person name="Muensterkoetter M."/>
            <person name="Walter M.C."/>
            <person name="Mannhaupt G."/>
            <person name="Kahmann R."/>
        </authorList>
    </citation>
    <scope>GENOME REANNOTATION</scope>
    <source>
        <strain>DSM 14603 / FGSC 9021 / UM521</strain>
    </source>
</reference>
<gene>
    <name type="primary">SWC5</name>
    <name type="ORF">UMAG_11753</name>
</gene>
<organism>
    <name type="scientific">Mycosarcoma maydis</name>
    <name type="common">Corn smut fungus</name>
    <name type="synonym">Ustilago maydis</name>
    <dbReference type="NCBI Taxonomy" id="5270"/>
    <lineage>
        <taxon>Eukaryota</taxon>
        <taxon>Fungi</taxon>
        <taxon>Dikarya</taxon>
        <taxon>Basidiomycota</taxon>
        <taxon>Ustilaginomycotina</taxon>
        <taxon>Ustilaginomycetes</taxon>
        <taxon>Ustilaginales</taxon>
        <taxon>Ustilaginaceae</taxon>
        <taxon>Mycosarcoma</taxon>
    </lineage>
</organism>
<dbReference type="EMBL" id="CM003153">
    <property type="protein sequence ID" value="KIS67223.1"/>
    <property type="molecule type" value="Genomic_DNA"/>
</dbReference>
<dbReference type="RefSeq" id="XP_011391201.1">
    <property type="nucleotide sequence ID" value="XM_011392899.1"/>
</dbReference>
<dbReference type="SMR" id="Q4P6D5"/>
<dbReference type="STRING" id="237631.Q4P6D5"/>
<dbReference type="EnsemblFungi" id="KIS67223">
    <property type="protein sequence ID" value="KIS67223"/>
    <property type="gene ID" value="UMAG_11753"/>
</dbReference>
<dbReference type="GeneID" id="23567602"/>
<dbReference type="KEGG" id="uma:UMAG_11753"/>
<dbReference type="VEuPathDB" id="FungiDB:UMAG_11753"/>
<dbReference type="eggNOG" id="KOG4776">
    <property type="taxonomic scope" value="Eukaryota"/>
</dbReference>
<dbReference type="HOGENOM" id="CLU_918668_0_0_1"/>
<dbReference type="InParanoid" id="Q4P6D5"/>
<dbReference type="OrthoDB" id="445677at2759"/>
<dbReference type="Proteomes" id="UP000000561">
    <property type="component" value="Chromosome 14"/>
</dbReference>
<dbReference type="GO" id="GO:0000812">
    <property type="term" value="C:Swr1 complex"/>
    <property type="evidence" value="ECO:0000318"/>
    <property type="project" value="GO_Central"/>
</dbReference>
<dbReference type="GO" id="GO:0006338">
    <property type="term" value="P:chromatin remodeling"/>
    <property type="evidence" value="ECO:0000318"/>
    <property type="project" value="GO_Central"/>
</dbReference>
<dbReference type="InterPro" id="IPR011421">
    <property type="entry name" value="BCNT-C"/>
</dbReference>
<dbReference type="InterPro" id="IPR027124">
    <property type="entry name" value="Swc5/CFDP1/2"/>
</dbReference>
<dbReference type="PANTHER" id="PTHR48407">
    <property type="entry name" value="CRANIOFACIAL DEVELOPMENT PROTEIN 1"/>
    <property type="match status" value="1"/>
</dbReference>
<dbReference type="PANTHER" id="PTHR48407:SF1">
    <property type="entry name" value="CRANIOFACIAL DEVELOPMENT PROTEIN 1"/>
    <property type="match status" value="1"/>
</dbReference>
<dbReference type="Pfam" id="PF07572">
    <property type="entry name" value="BCNT"/>
    <property type="match status" value="1"/>
</dbReference>
<dbReference type="PROSITE" id="PS51279">
    <property type="entry name" value="BCNT_C"/>
    <property type="match status" value="1"/>
</dbReference>
<evidence type="ECO:0000250" key="1"/>
<evidence type="ECO:0000255" key="2">
    <source>
        <dbReference type="PROSITE-ProRule" id="PRU00610"/>
    </source>
</evidence>
<evidence type="ECO:0000256" key="3">
    <source>
        <dbReference type="SAM" id="MobiDB-lite"/>
    </source>
</evidence>
<evidence type="ECO:0000305" key="4"/>
<protein>
    <recommendedName>
        <fullName>SWR1-complex protein 5</fullName>
    </recommendedName>
</protein>
<comment type="function">
    <text evidence="1">Component of the SWR1 complex which mediates the ATP-dependent exchange of histone H2A for the H2A variant HZT1 leading to transcriptional regulation of selected genes by chromatin remodeling. Involved in chromosome stability (By similarity).</text>
</comment>
<comment type="subunit">
    <text evidence="1">Component of the SWR1 chromatin remodeling complex.</text>
</comment>
<comment type="subcellular location">
    <subcellularLocation>
        <location evidence="1">Nucleus</location>
    </subcellularLocation>
</comment>
<comment type="similarity">
    <text evidence="4">Belongs to the SWC5 family.</text>
</comment>
<accession>Q4P6D5</accession>
<accession>A0A0D1CK39</accession>
<sequence length="354" mass="37533">MHSIANSSAPVSRSVRDMPNSGSDSDDDDDFVPDAEPSHTAVVRSGLSKQGKDAVVATDDPSDSDSDSDADGAHSETQDKPAGASVRAAEQIDADELEALRKEREELVAAAGGEQRLGKRRRLAHVSESGADNQVTNDNEVQALKAKAAAEWEAIKASESGSSMNEQVTQSTATGDYASATTLASTARQEMVSIPTTYKFAGELHTSMRLLPRSHPDALKYLSSQIASPTSTTSSAPAPSASASAPLPTSPASTSTSSSPSRPQPARPTPRRKKPSSLSALSAAATTKPTKLNTLEKSKLDWDTYKSDHSQLSQQELDELEHQTKRGGKGLGDMKGYLDRSDFLDRVKNRTAQP</sequence>
<name>SWC5_MYCMD</name>
<proteinExistence type="inferred from homology"/>